<sequence length="878" mass="102572">MEMPKDYNIEIEKQIQKKWEESKIYKFDEESNKPPYIIDTPPPYPTGRLHLGHALNWTYMDIIARYKRMKGFNVLFPQGWDCHGLPTEVKVEEIHGITKSDVDRHKFRELCIELTKENIEKMRRQIKSLGISIDWDKEYITMTPEYIKKSQTAFVRMYKDGLIYRGKFPVNWCPRCQTAIAFAEVEYKERESKLNYIKFPAADGEGHLLIATTRPELMAACVAILVHPEDERYKHLIGKEFIVPLFGHKVKLLADEDVEKEFGTGAVMVCTFGDKTDVLWVNRHKLEIKKAIDEKGELTEIAGKYKGLKTEEAREKIIEDLKKEGYLVKQEPIKQNVGVCWRCKTPIEIIVTEQWFVNVRKLIPKVREVADEIKWIPEHMKIRLLNWIEDMDWDWVISRQRIFATPIPVWYCPKCGNVVVAKEEDLPIDPTKTGYVCDKCGNKDLIPETDVLDTWMDSSITPMVITKWLDDDKFFEKHYPVQLRPQGHDIIRTWAFYTIVKSVALTGKKPWDEIVINGMVFGEDGHKMSKSRGNVVEPDEIIAKYGADALRLWASNSVVGDDVQFLWKEVDYGYRFLRKSWNACRFAKMHISDDIIDELKKPMEISNPIDLWILSKLQRLIERVDKDLENYRFNTIVEIYKFVWHEFCDNYIEMVKYRLYGDDEEAKKEARWTLYYVIDKVVRLLCPFAPHFSDYIAEIYKIDNLHFSFPEVDNRFINEEAEKFGEIAKNTVISIRRFKANSGMALNAPLKYVEIYTEDEETYLALNKTAEDIKGTLKIEELKIIKGKPALESKIVEIIPDKSKIGPEFKKNAKAVMDLIKNADEETLEKIINEGLETEYGVIRKEHIKDVKRALFCEGEEVDSVDIEGVLAMAIIRK</sequence>
<feature type="chain" id="PRO_0000106249" description="Valine--tRNA ligase">
    <location>
        <begin position="1"/>
        <end position="878"/>
    </location>
</feature>
<feature type="short sequence motif" description="'HIGH' region">
    <location>
        <begin position="43"/>
        <end position="53"/>
    </location>
</feature>
<feature type="short sequence motif" description="'KMSKS' region">
    <location>
        <begin position="527"/>
        <end position="531"/>
    </location>
</feature>
<feature type="binding site" evidence="1">
    <location>
        <position position="530"/>
    </location>
    <ligand>
        <name>ATP</name>
        <dbReference type="ChEBI" id="CHEBI:30616"/>
    </ligand>
</feature>
<gene>
    <name evidence="1" type="primary">valS</name>
    <name type="ordered locus">MJ1007</name>
</gene>
<name>SYV_METJA</name>
<keyword id="KW-0030">Aminoacyl-tRNA synthetase</keyword>
<keyword id="KW-0067">ATP-binding</keyword>
<keyword id="KW-0963">Cytoplasm</keyword>
<keyword id="KW-0436">Ligase</keyword>
<keyword id="KW-0547">Nucleotide-binding</keyword>
<keyword id="KW-0648">Protein biosynthesis</keyword>
<keyword id="KW-1185">Reference proteome</keyword>
<dbReference type="EC" id="6.1.1.9" evidence="1"/>
<dbReference type="EMBL" id="L77117">
    <property type="protein sequence ID" value="AAB99009.1"/>
    <property type="molecule type" value="Genomic_DNA"/>
</dbReference>
<dbReference type="PIR" id="F64425">
    <property type="entry name" value="F64425"/>
</dbReference>
<dbReference type="RefSeq" id="WP_010870520.1">
    <property type="nucleotide sequence ID" value="NC_000909.1"/>
</dbReference>
<dbReference type="SMR" id="Q58413"/>
<dbReference type="FunCoup" id="Q58413">
    <property type="interactions" value="168"/>
</dbReference>
<dbReference type="STRING" id="243232.MJ_1007"/>
<dbReference type="PaxDb" id="243232-MJ_1007"/>
<dbReference type="EnsemblBacteria" id="AAB99009">
    <property type="protein sequence ID" value="AAB99009"/>
    <property type="gene ID" value="MJ_1007"/>
</dbReference>
<dbReference type="GeneID" id="1451904"/>
<dbReference type="KEGG" id="mja:MJ_1007"/>
<dbReference type="eggNOG" id="arCOG00808">
    <property type="taxonomic scope" value="Archaea"/>
</dbReference>
<dbReference type="HOGENOM" id="CLU_001493_0_2_2"/>
<dbReference type="InParanoid" id="Q58413"/>
<dbReference type="OrthoDB" id="23906at2157"/>
<dbReference type="PhylomeDB" id="Q58413"/>
<dbReference type="Proteomes" id="UP000000805">
    <property type="component" value="Chromosome"/>
</dbReference>
<dbReference type="GO" id="GO:0005829">
    <property type="term" value="C:cytosol"/>
    <property type="evidence" value="ECO:0000318"/>
    <property type="project" value="GO_Central"/>
</dbReference>
<dbReference type="GO" id="GO:0002161">
    <property type="term" value="F:aminoacyl-tRNA deacylase activity"/>
    <property type="evidence" value="ECO:0007669"/>
    <property type="project" value="InterPro"/>
</dbReference>
<dbReference type="GO" id="GO:0005524">
    <property type="term" value="F:ATP binding"/>
    <property type="evidence" value="ECO:0007669"/>
    <property type="project" value="UniProtKB-UniRule"/>
</dbReference>
<dbReference type="GO" id="GO:0004832">
    <property type="term" value="F:valine-tRNA ligase activity"/>
    <property type="evidence" value="ECO:0000318"/>
    <property type="project" value="GO_Central"/>
</dbReference>
<dbReference type="GO" id="GO:0006438">
    <property type="term" value="P:valyl-tRNA aminoacylation"/>
    <property type="evidence" value="ECO:0000318"/>
    <property type="project" value="GO_Central"/>
</dbReference>
<dbReference type="CDD" id="cd07962">
    <property type="entry name" value="Anticodon_Ia_Val"/>
    <property type="match status" value="1"/>
</dbReference>
<dbReference type="CDD" id="cd00817">
    <property type="entry name" value="ValRS_core"/>
    <property type="match status" value="1"/>
</dbReference>
<dbReference type="FunFam" id="1.10.730.10:FF:000033">
    <property type="entry name" value="Valine--tRNA ligase"/>
    <property type="match status" value="1"/>
</dbReference>
<dbReference type="FunFam" id="3.40.50.620:FF:000192">
    <property type="entry name" value="Valine--tRNA ligase"/>
    <property type="match status" value="1"/>
</dbReference>
<dbReference type="FunFam" id="3.40.50.620:FF:000362">
    <property type="entry name" value="Valyl-tRNA synthetase"/>
    <property type="match status" value="1"/>
</dbReference>
<dbReference type="Gene3D" id="2.170.220.10">
    <property type="match status" value="1"/>
</dbReference>
<dbReference type="Gene3D" id="3.30.720.200">
    <property type="match status" value="1"/>
</dbReference>
<dbReference type="Gene3D" id="3.40.50.620">
    <property type="entry name" value="HUPs"/>
    <property type="match status" value="2"/>
</dbReference>
<dbReference type="Gene3D" id="1.10.730.10">
    <property type="entry name" value="Isoleucyl-tRNA Synthetase, Domain 1"/>
    <property type="match status" value="1"/>
</dbReference>
<dbReference type="Gene3D" id="3.90.740.10">
    <property type="entry name" value="Valyl/Leucyl/Isoleucyl-tRNA synthetase, editing domain"/>
    <property type="match status" value="1"/>
</dbReference>
<dbReference type="HAMAP" id="MF_02005">
    <property type="entry name" value="Val_tRNA_synth_type2"/>
    <property type="match status" value="1"/>
</dbReference>
<dbReference type="InterPro" id="IPR001412">
    <property type="entry name" value="aa-tRNA-synth_I_CS"/>
</dbReference>
<dbReference type="InterPro" id="IPR002300">
    <property type="entry name" value="aa-tRNA-synth_Ia"/>
</dbReference>
<dbReference type="InterPro" id="IPR033705">
    <property type="entry name" value="Anticodon_Ia_Val"/>
</dbReference>
<dbReference type="InterPro" id="IPR013155">
    <property type="entry name" value="M/V/L/I-tRNA-synth_anticd-bd"/>
</dbReference>
<dbReference type="InterPro" id="IPR014729">
    <property type="entry name" value="Rossmann-like_a/b/a_fold"/>
</dbReference>
<dbReference type="InterPro" id="IPR009080">
    <property type="entry name" value="tRNAsynth_Ia_anticodon-bd"/>
</dbReference>
<dbReference type="InterPro" id="IPR009008">
    <property type="entry name" value="Val/Leu/Ile-tRNA-synth_edit"/>
</dbReference>
<dbReference type="InterPro" id="IPR022874">
    <property type="entry name" value="Valine-tRNA_ligase_type_2"/>
</dbReference>
<dbReference type="InterPro" id="IPR002303">
    <property type="entry name" value="Valyl-tRNA_ligase"/>
</dbReference>
<dbReference type="NCBIfam" id="NF009687">
    <property type="entry name" value="PRK13208.1"/>
    <property type="match status" value="1"/>
</dbReference>
<dbReference type="NCBIfam" id="TIGR00422">
    <property type="entry name" value="valS"/>
    <property type="match status" value="1"/>
</dbReference>
<dbReference type="PANTHER" id="PTHR11946:SF93">
    <property type="entry name" value="VALINE--TRNA LIGASE, CHLOROPLASTIC_MITOCHONDRIAL 2"/>
    <property type="match status" value="1"/>
</dbReference>
<dbReference type="PANTHER" id="PTHR11946">
    <property type="entry name" value="VALYL-TRNA SYNTHETASES"/>
    <property type="match status" value="1"/>
</dbReference>
<dbReference type="Pfam" id="PF08264">
    <property type="entry name" value="Anticodon_1"/>
    <property type="match status" value="1"/>
</dbReference>
<dbReference type="Pfam" id="PF00133">
    <property type="entry name" value="tRNA-synt_1"/>
    <property type="match status" value="1"/>
</dbReference>
<dbReference type="PRINTS" id="PR00986">
    <property type="entry name" value="TRNASYNTHVAL"/>
</dbReference>
<dbReference type="SUPFAM" id="SSF47323">
    <property type="entry name" value="Anticodon-binding domain of a subclass of class I aminoacyl-tRNA synthetases"/>
    <property type="match status" value="1"/>
</dbReference>
<dbReference type="SUPFAM" id="SSF52374">
    <property type="entry name" value="Nucleotidylyl transferase"/>
    <property type="match status" value="1"/>
</dbReference>
<dbReference type="SUPFAM" id="SSF50677">
    <property type="entry name" value="ValRS/IleRS/LeuRS editing domain"/>
    <property type="match status" value="1"/>
</dbReference>
<dbReference type="PROSITE" id="PS00178">
    <property type="entry name" value="AA_TRNA_LIGASE_I"/>
    <property type="match status" value="1"/>
</dbReference>
<accession>Q58413</accession>
<reference key="1">
    <citation type="journal article" date="1996" name="Science">
        <title>Complete genome sequence of the methanogenic archaeon, Methanococcus jannaschii.</title>
        <authorList>
            <person name="Bult C.J."/>
            <person name="White O."/>
            <person name="Olsen G.J."/>
            <person name="Zhou L."/>
            <person name="Fleischmann R.D."/>
            <person name="Sutton G.G."/>
            <person name="Blake J.A."/>
            <person name="FitzGerald L.M."/>
            <person name="Clayton R.A."/>
            <person name="Gocayne J.D."/>
            <person name="Kerlavage A.R."/>
            <person name="Dougherty B.A."/>
            <person name="Tomb J.-F."/>
            <person name="Adams M.D."/>
            <person name="Reich C.I."/>
            <person name="Overbeek R."/>
            <person name="Kirkness E.F."/>
            <person name="Weinstock K.G."/>
            <person name="Merrick J.M."/>
            <person name="Glodek A."/>
            <person name="Scott J.L."/>
            <person name="Geoghagen N.S.M."/>
            <person name="Weidman J.F."/>
            <person name="Fuhrmann J.L."/>
            <person name="Nguyen D."/>
            <person name="Utterback T.R."/>
            <person name="Kelley J.M."/>
            <person name="Peterson J.D."/>
            <person name="Sadow P.W."/>
            <person name="Hanna M.C."/>
            <person name="Cotton M.D."/>
            <person name="Roberts K.M."/>
            <person name="Hurst M.A."/>
            <person name="Kaine B.P."/>
            <person name="Borodovsky M."/>
            <person name="Klenk H.-P."/>
            <person name="Fraser C.M."/>
            <person name="Smith H.O."/>
            <person name="Woese C.R."/>
            <person name="Venter J.C."/>
        </authorList>
    </citation>
    <scope>NUCLEOTIDE SEQUENCE [LARGE SCALE GENOMIC DNA]</scope>
    <source>
        <strain>ATCC 43067 / DSM 2661 / JAL-1 / JCM 10045 / NBRC 100440</strain>
    </source>
</reference>
<organism>
    <name type="scientific">Methanocaldococcus jannaschii (strain ATCC 43067 / DSM 2661 / JAL-1 / JCM 10045 / NBRC 100440)</name>
    <name type="common">Methanococcus jannaschii</name>
    <dbReference type="NCBI Taxonomy" id="243232"/>
    <lineage>
        <taxon>Archaea</taxon>
        <taxon>Methanobacteriati</taxon>
        <taxon>Methanobacteriota</taxon>
        <taxon>Methanomada group</taxon>
        <taxon>Methanococci</taxon>
        <taxon>Methanococcales</taxon>
        <taxon>Methanocaldococcaceae</taxon>
        <taxon>Methanocaldococcus</taxon>
    </lineage>
</organism>
<comment type="function">
    <text evidence="1">Catalyzes the attachment of valine to tRNA(Val). As ValRS can inadvertently accommodate and process structurally similar amino acids such as threonine, to avoid such errors, it has a 'posttransfer' editing activity that hydrolyzes mischarged Thr-tRNA(Val) in a tRNA-dependent manner.</text>
</comment>
<comment type="catalytic activity">
    <reaction evidence="1">
        <text>tRNA(Val) + L-valine + ATP = L-valyl-tRNA(Val) + AMP + diphosphate</text>
        <dbReference type="Rhea" id="RHEA:10704"/>
        <dbReference type="Rhea" id="RHEA-COMP:9672"/>
        <dbReference type="Rhea" id="RHEA-COMP:9708"/>
        <dbReference type="ChEBI" id="CHEBI:30616"/>
        <dbReference type="ChEBI" id="CHEBI:33019"/>
        <dbReference type="ChEBI" id="CHEBI:57762"/>
        <dbReference type="ChEBI" id="CHEBI:78442"/>
        <dbReference type="ChEBI" id="CHEBI:78537"/>
        <dbReference type="ChEBI" id="CHEBI:456215"/>
        <dbReference type="EC" id="6.1.1.9"/>
    </reaction>
</comment>
<comment type="subcellular location">
    <subcellularLocation>
        <location evidence="1">Cytoplasm</location>
    </subcellularLocation>
</comment>
<comment type="domain">
    <text evidence="1">ValRS has two distinct active sites: one for aminoacylation and one for editing. The misactivated threonine is translocated from the active site to the editing site.</text>
</comment>
<comment type="similarity">
    <text evidence="1">Belongs to the class-I aminoacyl-tRNA synthetase family. ValS type 2 subfamily.</text>
</comment>
<evidence type="ECO:0000255" key="1">
    <source>
        <dbReference type="HAMAP-Rule" id="MF_02005"/>
    </source>
</evidence>
<protein>
    <recommendedName>
        <fullName evidence="1">Valine--tRNA ligase</fullName>
        <ecNumber evidence="1">6.1.1.9</ecNumber>
    </recommendedName>
    <alternativeName>
        <fullName evidence="1">Valyl-tRNA synthetase</fullName>
        <shortName evidence="1">ValRS</shortName>
    </alternativeName>
</protein>
<proteinExistence type="inferred from homology"/>